<protein>
    <recommendedName>
        <fullName evidence="1">Enolase-phosphatase E1</fullName>
        <ecNumber evidence="1">3.1.3.77</ecNumber>
    </recommendedName>
    <alternativeName>
        <fullName evidence="1">2,3-diketo-5-methylthio-1-phosphopentane phosphatase</fullName>
    </alternativeName>
</protein>
<gene>
    <name evidence="1" type="primary">mtnC</name>
</gene>
<feature type="chain" id="PRO_0000357361" description="Enolase-phosphatase E1">
    <location>
        <begin position="1"/>
        <end position="229"/>
    </location>
</feature>
<feature type="region of interest" description="Disordered" evidence="2">
    <location>
        <begin position="208"/>
        <end position="229"/>
    </location>
</feature>
<feature type="compositionally biased region" description="Polar residues" evidence="2">
    <location>
        <begin position="208"/>
        <end position="218"/>
    </location>
</feature>
<feature type="compositionally biased region" description="Basic and acidic residues" evidence="2">
    <location>
        <begin position="220"/>
        <end position="229"/>
    </location>
</feature>
<keyword id="KW-0028">Amino-acid biosynthesis</keyword>
<keyword id="KW-0378">Hydrolase</keyword>
<keyword id="KW-0460">Magnesium</keyword>
<keyword id="KW-0479">Metal-binding</keyword>
<keyword id="KW-0486">Methionine biosynthesis</keyword>
<comment type="function">
    <text evidence="1">Bifunctional enzyme that catalyzes the enolization of 2,3-diketo-5-methylthiopentyl-1-phosphate (DK-MTP-1-P) into the intermediate 2-hydroxy-3-keto-5-methylthiopentenyl-1-phosphate (HK-MTPenyl-1-P), which is then dephosphorylated to form the acireductone 1,2-dihydroxy-3-keto-5-methylthiopentene (DHK-MTPene).</text>
</comment>
<comment type="catalytic activity">
    <reaction evidence="1">
        <text>5-methylsulfanyl-2,3-dioxopentyl phosphate + H2O = 1,2-dihydroxy-5-(methylsulfanyl)pent-1-en-3-one + phosphate</text>
        <dbReference type="Rhea" id="RHEA:21700"/>
        <dbReference type="ChEBI" id="CHEBI:15377"/>
        <dbReference type="ChEBI" id="CHEBI:43474"/>
        <dbReference type="ChEBI" id="CHEBI:49252"/>
        <dbReference type="ChEBI" id="CHEBI:58828"/>
        <dbReference type="EC" id="3.1.3.77"/>
    </reaction>
</comment>
<comment type="cofactor">
    <cofactor evidence="1">
        <name>Mg(2+)</name>
        <dbReference type="ChEBI" id="CHEBI:18420"/>
    </cofactor>
    <text evidence="1">Binds 1 Mg(2+) ion per subunit.</text>
</comment>
<comment type="pathway">
    <text evidence="1">Amino-acid biosynthesis; L-methionine biosynthesis via salvage pathway; L-methionine from S-methyl-5-thio-alpha-D-ribose 1-phosphate: step 3/6.</text>
</comment>
<comment type="pathway">
    <text evidence="1">Amino-acid biosynthesis; L-methionine biosynthesis via salvage pathway; L-methionine from S-methyl-5-thio-alpha-D-ribose 1-phosphate: step 4/6.</text>
</comment>
<comment type="subunit">
    <text evidence="1">Monomer.</text>
</comment>
<comment type="similarity">
    <text evidence="1">Belongs to the HAD-like hydrolase superfamily. MasA/MtnC family.</text>
</comment>
<dbReference type="EC" id="3.1.3.77" evidence="1"/>
<dbReference type="EMBL" id="AM075208">
    <property type="protein sequence ID" value="CAJ27335.1"/>
    <property type="molecule type" value="Genomic_DNA"/>
</dbReference>
<dbReference type="RefSeq" id="WP_007865533.1">
    <property type="nucleotide sequence ID" value="NZ_WARK01000002.1"/>
</dbReference>
<dbReference type="SMR" id="Q3ZUZ9"/>
<dbReference type="STRING" id="28141.CSK29544_04012"/>
<dbReference type="UniPathway" id="UPA00904">
    <property type="reaction ID" value="UER00876"/>
</dbReference>
<dbReference type="UniPathway" id="UPA00904">
    <property type="reaction ID" value="UER00877"/>
</dbReference>
<dbReference type="GO" id="GO:0043715">
    <property type="term" value="F:2,3-diketo-5-methylthiopentyl-1-phosphate enolase activity"/>
    <property type="evidence" value="ECO:0007669"/>
    <property type="project" value="UniProtKB-UniRule"/>
</dbReference>
<dbReference type="GO" id="GO:0043716">
    <property type="term" value="F:2-hydroxy-3-keto-5-methylthiopentenyl-1-phosphate phosphatase activity"/>
    <property type="evidence" value="ECO:0007669"/>
    <property type="project" value="UniProtKB-UniRule"/>
</dbReference>
<dbReference type="GO" id="GO:0043874">
    <property type="term" value="F:acireductone synthase activity"/>
    <property type="evidence" value="ECO:0007669"/>
    <property type="project" value="UniProtKB-EC"/>
</dbReference>
<dbReference type="GO" id="GO:0000287">
    <property type="term" value="F:magnesium ion binding"/>
    <property type="evidence" value="ECO:0007669"/>
    <property type="project" value="UniProtKB-UniRule"/>
</dbReference>
<dbReference type="GO" id="GO:0019509">
    <property type="term" value="P:L-methionine salvage from methylthioadenosine"/>
    <property type="evidence" value="ECO:0007669"/>
    <property type="project" value="UniProtKB-UniRule"/>
</dbReference>
<dbReference type="CDD" id="cd01629">
    <property type="entry name" value="HAD_EP"/>
    <property type="match status" value="1"/>
</dbReference>
<dbReference type="Gene3D" id="1.10.720.60">
    <property type="match status" value="1"/>
</dbReference>
<dbReference type="Gene3D" id="3.40.50.1000">
    <property type="entry name" value="HAD superfamily/HAD-like"/>
    <property type="match status" value="1"/>
</dbReference>
<dbReference type="HAMAP" id="MF_01681">
    <property type="entry name" value="Salvage_MtnC"/>
    <property type="match status" value="1"/>
</dbReference>
<dbReference type="InterPro" id="IPR023943">
    <property type="entry name" value="Enolase-ppase_E1"/>
</dbReference>
<dbReference type="InterPro" id="IPR036412">
    <property type="entry name" value="HAD-like_sf"/>
</dbReference>
<dbReference type="InterPro" id="IPR023214">
    <property type="entry name" value="HAD_sf"/>
</dbReference>
<dbReference type="NCBIfam" id="TIGR01691">
    <property type="entry name" value="enolase-ppase"/>
    <property type="match status" value="1"/>
</dbReference>
<dbReference type="PANTHER" id="PTHR20371">
    <property type="entry name" value="ENOLASE-PHOSPHATASE E1"/>
    <property type="match status" value="1"/>
</dbReference>
<dbReference type="PANTHER" id="PTHR20371:SF1">
    <property type="entry name" value="ENOLASE-PHOSPHATASE E1"/>
    <property type="match status" value="1"/>
</dbReference>
<dbReference type="Pfam" id="PF00702">
    <property type="entry name" value="Hydrolase"/>
    <property type="match status" value="1"/>
</dbReference>
<dbReference type="SFLD" id="SFLDG01129">
    <property type="entry name" value="C1.5:_HAD__Beta-PGM__Phosphata"/>
    <property type="match status" value="1"/>
</dbReference>
<dbReference type="SFLD" id="SFLDF00044">
    <property type="entry name" value="enolase-phosphatase"/>
    <property type="match status" value="1"/>
</dbReference>
<dbReference type="SUPFAM" id="SSF56784">
    <property type="entry name" value="HAD-like"/>
    <property type="match status" value="1"/>
</dbReference>
<accession>Q3ZUZ9</accession>
<name>MTNC_CROSK</name>
<evidence type="ECO:0000255" key="1">
    <source>
        <dbReference type="HAMAP-Rule" id="MF_01681"/>
    </source>
</evidence>
<evidence type="ECO:0000256" key="2">
    <source>
        <dbReference type="SAM" id="MobiDB-lite"/>
    </source>
</evidence>
<proteinExistence type="inferred from homology"/>
<organism>
    <name type="scientific">Cronobacter sakazakii</name>
    <name type="common">Enterobacter sakazakii</name>
    <dbReference type="NCBI Taxonomy" id="28141"/>
    <lineage>
        <taxon>Bacteria</taxon>
        <taxon>Pseudomonadati</taxon>
        <taxon>Pseudomonadota</taxon>
        <taxon>Gammaproteobacteria</taxon>
        <taxon>Enterobacterales</taxon>
        <taxon>Enterobacteriaceae</taxon>
        <taxon>Cronobacter</taxon>
    </lineage>
</organism>
<reference key="1">
    <citation type="journal article" date="2006" name="Syst. Appl. Microbiol.">
        <title>Molecular characterization of the alpha-glucosidase activity in Enterobacter sakazakii reveals the presence of a putative gene cluster for palatinose metabolism.</title>
        <authorList>
            <person name="Lehner A."/>
            <person name="Riedel K."/>
            <person name="Rattei T."/>
            <person name="Ruepp A."/>
            <person name="Frishman D."/>
            <person name="Breeuwer P."/>
            <person name="Diep B."/>
            <person name="Eberl L."/>
            <person name="Stephan R."/>
        </authorList>
    </citation>
    <scope>NUCLEOTIDE SEQUENCE [GENOMIC DNA]</scope>
    <source>
        <strain>858</strain>
    </source>
</reference>
<sequence length="229" mass="26176">MIRAIVTDIEGTTTDIRFVHNVLFPYARERLERFIRSGEQREPVNLLLNELRGEIHAPAASVDQLIETLFKFMDEDRKSPALKSIQGYIWREGYVNGDFTGHLYPDVVPALRRWSDQDIDIYIYSSGSVPAQKLLFSHSDEGDVTELLSGFFDTHVGAKRQVSSYRNISMKTGVPVHQMLFLSDIREELDAAREAGWKTVQLIRGEPDTQSTHRQVSSFDDIHPEQIPT</sequence>